<dbReference type="EMBL" id="L12251">
    <property type="protein sequence ID" value="AAB17676.1"/>
    <property type="molecule type" value="Genomic_DNA"/>
</dbReference>
<dbReference type="PIR" id="S35021">
    <property type="entry name" value="S35021"/>
</dbReference>
<dbReference type="RefSeq" id="WP_014857557.1">
    <property type="nucleotide sequence ID" value="NZ_WITA01000257.1"/>
</dbReference>
<dbReference type="GeneID" id="48977738"/>
<dbReference type="InterPro" id="IPR016775">
    <property type="entry name" value="Nodulation_NolB"/>
</dbReference>
<dbReference type="Pfam" id="PF17398">
    <property type="entry name" value="NolB"/>
    <property type="match status" value="1"/>
</dbReference>
<dbReference type="PIRSF" id="PIRSF020514">
    <property type="entry name" value="Nodulation_NolB"/>
    <property type="match status" value="1"/>
</dbReference>
<proteinExistence type="evidence at transcript level"/>
<gene>
    <name type="primary">nolB</name>
</gene>
<protein>
    <recommendedName>
        <fullName>Nodulation protein NolB</fullName>
    </recommendedName>
</protein>
<feature type="chain" id="PRO_0000096940" description="Nodulation protein NolB">
    <location>
        <begin position="1"/>
        <end position="164"/>
    </location>
</feature>
<feature type="region of interest" description="Disordered" evidence="1">
    <location>
        <begin position="37"/>
        <end position="57"/>
    </location>
</feature>
<sequence>MMLPVTSISNSLPRVASSSFGEQAQFERALAQAADSMKNDTASTPVRTAPISPPMDVHRAAPTSPLKDRVLQTISAICPDSIVAAAAPNHKAALISGAPPGPSQKLPVEDGAGTERLGIPQGGHDFDVMVAGLRDLYNGVTQVALVSKGISGITSSVNKLLKEG</sequence>
<geneLocation type="plasmid">
    <name>sym</name>
</geneLocation>
<reference key="1">
    <citation type="journal article" date="1993" name="Mol. Microbiol.">
        <title>Molecular cloning and characterization of a sym plasmid locus that regulates cultivar-specific nodulation of soybean by Rhizobium fredii USDA257.</title>
        <authorList>
            <person name="Meinhardt L.W."/>
            <person name="Krishnan H.B."/>
            <person name="Balatti P.A."/>
            <person name="Pueppke S.G."/>
        </authorList>
    </citation>
    <scope>NUCLEOTIDE SEQUENCE [GENOMIC DNA]</scope>
    <source>
        <strain>USDA 257</strain>
    </source>
</reference>
<evidence type="ECO:0000256" key="1">
    <source>
        <dbReference type="SAM" id="MobiDB-lite"/>
    </source>
</evidence>
<organism>
    <name type="scientific">Rhizobium fredii</name>
    <name type="common">Sinorhizobium fredii</name>
    <dbReference type="NCBI Taxonomy" id="380"/>
    <lineage>
        <taxon>Bacteria</taxon>
        <taxon>Pseudomonadati</taxon>
        <taxon>Pseudomonadota</taxon>
        <taxon>Alphaproteobacteria</taxon>
        <taxon>Hyphomicrobiales</taxon>
        <taxon>Rhizobiaceae</taxon>
        <taxon>Sinorhizobium/Ensifer group</taxon>
        <taxon>Sinorhizobium</taxon>
    </lineage>
</organism>
<keyword id="KW-0536">Nodulation</keyword>
<keyword id="KW-0614">Plasmid</keyword>
<comment type="function">
    <text>Regulates cultivar-specific nodulation of soybean.</text>
</comment>
<comment type="developmental stage">
    <text>Expressed continuously from preinfection to the stage of the functional nodule.</text>
</comment>
<comment type="induction">
    <text>By flavonoid signal compounds.</text>
</comment>
<name>NOLB_RHIFR</name>
<accession>P33208</accession>